<evidence type="ECO:0000255" key="1">
    <source>
        <dbReference type="HAMAP-Rule" id="MF_00366"/>
    </source>
</evidence>
<reference key="1">
    <citation type="journal article" date="2004" name="Nat. Genet.">
        <title>Evidence in the Legionella pneumophila genome for exploitation of host cell functions and high genome plasticity.</title>
        <authorList>
            <person name="Cazalet C."/>
            <person name="Rusniok C."/>
            <person name="Brueggemann H."/>
            <person name="Zidane N."/>
            <person name="Magnier A."/>
            <person name="Ma L."/>
            <person name="Tichit M."/>
            <person name="Jarraud S."/>
            <person name="Bouchier C."/>
            <person name="Vandenesch F."/>
            <person name="Kunst F."/>
            <person name="Etienne J."/>
            <person name="Glaser P."/>
            <person name="Buchrieser C."/>
        </authorList>
    </citation>
    <scope>NUCLEOTIDE SEQUENCE [LARGE SCALE GENOMIC DNA]</scope>
    <source>
        <strain>Paris</strain>
    </source>
</reference>
<name>RPOZ_LEGPA</name>
<gene>
    <name evidence="1" type="primary">rpoZ</name>
    <name type="ordered locus">lpp1991</name>
</gene>
<keyword id="KW-0240">DNA-directed RNA polymerase</keyword>
<keyword id="KW-0548">Nucleotidyltransferase</keyword>
<keyword id="KW-0804">Transcription</keyword>
<keyword id="KW-0808">Transferase</keyword>
<sequence>MARVTVEDCLEHVKNRFELVMVATKRARQIAVRGDQPMVEWENDKPTVVALREIAEGYVTADILDED</sequence>
<proteinExistence type="inferred from homology"/>
<protein>
    <recommendedName>
        <fullName evidence="1">DNA-directed RNA polymerase subunit omega</fullName>
        <shortName evidence="1">RNAP omega subunit</shortName>
        <ecNumber evidence="1">2.7.7.6</ecNumber>
    </recommendedName>
    <alternativeName>
        <fullName evidence="1">RNA polymerase omega subunit</fullName>
    </alternativeName>
    <alternativeName>
        <fullName evidence="1">Transcriptase subunit omega</fullName>
    </alternativeName>
</protein>
<dbReference type="EC" id="2.7.7.6" evidence="1"/>
<dbReference type="EMBL" id="CR628336">
    <property type="protein sequence ID" value="CAH13143.1"/>
    <property type="molecule type" value="Genomic_DNA"/>
</dbReference>
<dbReference type="RefSeq" id="WP_011214258.1">
    <property type="nucleotide sequence ID" value="NC_006368.1"/>
</dbReference>
<dbReference type="SMR" id="Q5X3P3"/>
<dbReference type="GeneID" id="57036003"/>
<dbReference type="KEGG" id="lpp:lpp1991"/>
<dbReference type="LegioList" id="lpp1991"/>
<dbReference type="HOGENOM" id="CLU_125406_5_2_6"/>
<dbReference type="GO" id="GO:0000428">
    <property type="term" value="C:DNA-directed RNA polymerase complex"/>
    <property type="evidence" value="ECO:0007669"/>
    <property type="project" value="UniProtKB-KW"/>
</dbReference>
<dbReference type="GO" id="GO:0003677">
    <property type="term" value="F:DNA binding"/>
    <property type="evidence" value="ECO:0007669"/>
    <property type="project" value="UniProtKB-UniRule"/>
</dbReference>
<dbReference type="GO" id="GO:0003899">
    <property type="term" value="F:DNA-directed RNA polymerase activity"/>
    <property type="evidence" value="ECO:0007669"/>
    <property type="project" value="UniProtKB-UniRule"/>
</dbReference>
<dbReference type="GO" id="GO:0006351">
    <property type="term" value="P:DNA-templated transcription"/>
    <property type="evidence" value="ECO:0007669"/>
    <property type="project" value="UniProtKB-UniRule"/>
</dbReference>
<dbReference type="Gene3D" id="3.90.940.10">
    <property type="match status" value="1"/>
</dbReference>
<dbReference type="HAMAP" id="MF_00366">
    <property type="entry name" value="RNApol_bact_RpoZ"/>
    <property type="match status" value="1"/>
</dbReference>
<dbReference type="InterPro" id="IPR003716">
    <property type="entry name" value="DNA-dir_RNA_pol_omega"/>
</dbReference>
<dbReference type="InterPro" id="IPR006110">
    <property type="entry name" value="Pol_omega/Rpo6/RPB6"/>
</dbReference>
<dbReference type="InterPro" id="IPR036161">
    <property type="entry name" value="RPB6/omega-like_sf"/>
</dbReference>
<dbReference type="NCBIfam" id="TIGR00690">
    <property type="entry name" value="rpoZ"/>
    <property type="match status" value="1"/>
</dbReference>
<dbReference type="PANTHER" id="PTHR34476">
    <property type="entry name" value="DNA-DIRECTED RNA POLYMERASE SUBUNIT OMEGA"/>
    <property type="match status" value="1"/>
</dbReference>
<dbReference type="PANTHER" id="PTHR34476:SF1">
    <property type="entry name" value="DNA-DIRECTED RNA POLYMERASE SUBUNIT OMEGA"/>
    <property type="match status" value="1"/>
</dbReference>
<dbReference type="Pfam" id="PF01192">
    <property type="entry name" value="RNA_pol_Rpb6"/>
    <property type="match status" value="1"/>
</dbReference>
<dbReference type="SMART" id="SM01409">
    <property type="entry name" value="RNA_pol_Rpb6"/>
    <property type="match status" value="1"/>
</dbReference>
<dbReference type="SUPFAM" id="SSF63562">
    <property type="entry name" value="RPB6/omega subunit-like"/>
    <property type="match status" value="1"/>
</dbReference>
<feature type="chain" id="PRO_0000237471" description="DNA-directed RNA polymerase subunit omega">
    <location>
        <begin position="1"/>
        <end position="67"/>
    </location>
</feature>
<organism>
    <name type="scientific">Legionella pneumophila (strain Paris)</name>
    <dbReference type="NCBI Taxonomy" id="297246"/>
    <lineage>
        <taxon>Bacteria</taxon>
        <taxon>Pseudomonadati</taxon>
        <taxon>Pseudomonadota</taxon>
        <taxon>Gammaproteobacteria</taxon>
        <taxon>Legionellales</taxon>
        <taxon>Legionellaceae</taxon>
        <taxon>Legionella</taxon>
    </lineage>
</organism>
<accession>Q5X3P3</accession>
<comment type="function">
    <text evidence="1">Promotes RNA polymerase assembly. Latches the N- and C-terminal regions of the beta' subunit thereby facilitating its interaction with the beta and alpha subunits.</text>
</comment>
<comment type="catalytic activity">
    <reaction evidence="1">
        <text>RNA(n) + a ribonucleoside 5'-triphosphate = RNA(n+1) + diphosphate</text>
        <dbReference type="Rhea" id="RHEA:21248"/>
        <dbReference type="Rhea" id="RHEA-COMP:14527"/>
        <dbReference type="Rhea" id="RHEA-COMP:17342"/>
        <dbReference type="ChEBI" id="CHEBI:33019"/>
        <dbReference type="ChEBI" id="CHEBI:61557"/>
        <dbReference type="ChEBI" id="CHEBI:140395"/>
        <dbReference type="EC" id="2.7.7.6"/>
    </reaction>
</comment>
<comment type="subunit">
    <text evidence="1">The RNAP catalytic core consists of 2 alpha, 1 beta, 1 beta' and 1 omega subunit. When a sigma factor is associated with the core the holoenzyme is formed, which can initiate transcription.</text>
</comment>
<comment type="similarity">
    <text evidence="1">Belongs to the RNA polymerase subunit omega family.</text>
</comment>